<accession>P52620</accession>
<reference key="1">
    <citation type="submission" date="1995-10" db="EMBL/GenBank/DDBJ databases">
        <authorList>
            <person name="Berenstein D."/>
            <person name="Skovgaard O."/>
        </authorList>
    </citation>
    <scope>NUCLEOTIDE SEQUENCE [GENOMIC DNA]</scope>
    <source>
        <strain>ATCC 33843 / NCIMB 1871 / 392 / MAV</strain>
    </source>
</reference>
<organism>
    <name type="scientific">Vibrio harveyi</name>
    <name type="common">Beneckea harveyi</name>
    <dbReference type="NCBI Taxonomy" id="669"/>
    <lineage>
        <taxon>Bacteria</taxon>
        <taxon>Pseudomonadati</taxon>
        <taxon>Pseudomonadota</taxon>
        <taxon>Gammaproteobacteria</taxon>
        <taxon>Vibrionales</taxon>
        <taxon>Vibrionaceae</taxon>
        <taxon>Vibrio</taxon>
    </lineage>
</organism>
<dbReference type="EMBL" id="L47617">
    <property type="protein sequence ID" value="AAA78258.1"/>
    <property type="molecule type" value="Genomic_DNA"/>
</dbReference>
<dbReference type="SMR" id="P52620"/>
<dbReference type="STRING" id="669.AL538_09695"/>
<dbReference type="GO" id="GO:0005737">
    <property type="term" value="C:cytoplasm"/>
    <property type="evidence" value="ECO:0007669"/>
    <property type="project" value="UniProtKB-SubCell"/>
</dbReference>
<dbReference type="GO" id="GO:0009360">
    <property type="term" value="C:DNA polymerase III complex"/>
    <property type="evidence" value="ECO:0007669"/>
    <property type="project" value="InterPro"/>
</dbReference>
<dbReference type="GO" id="GO:0008408">
    <property type="term" value="F:3'-5' exonuclease activity"/>
    <property type="evidence" value="ECO:0007669"/>
    <property type="project" value="InterPro"/>
</dbReference>
<dbReference type="GO" id="GO:0003677">
    <property type="term" value="F:DNA binding"/>
    <property type="evidence" value="ECO:0007669"/>
    <property type="project" value="UniProtKB-KW"/>
</dbReference>
<dbReference type="GO" id="GO:0003887">
    <property type="term" value="F:DNA-directed DNA polymerase activity"/>
    <property type="evidence" value="ECO:0007669"/>
    <property type="project" value="UniProtKB-KW"/>
</dbReference>
<dbReference type="GO" id="GO:0006271">
    <property type="term" value="P:DNA strand elongation involved in DNA replication"/>
    <property type="evidence" value="ECO:0007669"/>
    <property type="project" value="TreeGrafter"/>
</dbReference>
<dbReference type="CDD" id="cd00140">
    <property type="entry name" value="beta_clamp"/>
    <property type="match status" value="1"/>
</dbReference>
<dbReference type="FunFam" id="3.10.150.10:FF:000001">
    <property type="entry name" value="Beta sliding clamp"/>
    <property type="match status" value="1"/>
</dbReference>
<dbReference type="Gene3D" id="3.10.150.10">
    <property type="entry name" value="DNA Polymerase III, subunit A, domain 2"/>
    <property type="match status" value="1"/>
</dbReference>
<dbReference type="InterPro" id="IPR046938">
    <property type="entry name" value="DNA_clamp_sf"/>
</dbReference>
<dbReference type="InterPro" id="IPR001001">
    <property type="entry name" value="DNA_polIII_beta"/>
</dbReference>
<dbReference type="InterPro" id="IPR022634">
    <property type="entry name" value="DNA_polIII_beta_N"/>
</dbReference>
<dbReference type="PANTHER" id="PTHR30478:SF0">
    <property type="entry name" value="BETA SLIDING CLAMP"/>
    <property type="match status" value="1"/>
</dbReference>
<dbReference type="PANTHER" id="PTHR30478">
    <property type="entry name" value="DNA POLYMERASE III SUBUNIT BETA"/>
    <property type="match status" value="1"/>
</dbReference>
<dbReference type="Pfam" id="PF00712">
    <property type="entry name" value="DNA_pol3_beta"/>
    <property type="match status" value="1"/>
</dbReference>
<dbReference type="SUPFAM" id="SSF55979">
    <property type="entry name" value="DNA clamp"/>
    <property type="match status" value="1"/>
</dbReference>
<proteinExistence type="inferred from homology"/>
<feature type="chain" id="PRO_0000105478" description="Beta sliding clamp">
    <location>
        <begin position="1"/>
        <end position="145" status="greater than"/>
    </location>
</feature>
<feature type="non-terminal residue">
    <location>
        <position position="145"/>
    </location>
</feature>
<evidence type="ECO:0000250" key="1">
    <source>
        <dbReference type="UniProtKB" id="P0A988"/>
    </source>
</evidence>
<evidence type="ECO:0000305" key="2"/>
<comment type="function">
    <text evidence="1">Confers DNA tethering and processivity to DNA polymerases and other proteins. Acts as a clamp, forming a ring around DNA (a reaction catalyzed by the clamp-loading complex) which diffuses in an ATP-independent manner freely and bidirectionally along dsDNA. Initially characterized for its ability to contact the catalytic subunit of DNA polymerase III (Pol III), a complex, multichain enzyme responsible for most of the replicative synthesis in bacteria; Pol III exhibits 3'-5' exonuclease proofreading activity. The beta chain is required for initiation of replication as well as for processivity of DNA replication.</text>
</comment>
<comment type="subunit">
    <text evidence="1">Forms a ring-shaped head-to-tail homodimer around DNA which binds and tethers DNA polymerases and other proteins to the DNA. The DNA replisome complex has a single clamp-loading complex (3 tau and 1 each of delta, delta', psi and chi subunits) which binds 3 Pol III cores (1 core on the leading strand and 2 on the lagging strand) each with a beta sliding clamp dimer. Additional proteins in the replisome are other copies of gamma, psi and chi, Ssb, DNA helicase and RNA primase.</text>
</comment>
<comment type="subcellular location">
    <subcellularLocation>
        <location evidence="1">Cytoplasm</location>
    </subcellularLocation>
</comment>
<comment type="similarity">
    <text evidence="2">Belongs to the beta sliding clamp family.</text>
</comment>
<protein>
    <recommendedName>
        <fullName>Beta sliding clamp</fullName>
        <shortName>Beta clamp</shortName>
        <shortName>Sliding clamp</shortName>
    </recommendedName>
    <alternativeName>
        <fullName>Beta-clamp processivity factor</fullName>
    </alternativeName>
    <alternativeName>
        <fullName>DNA polymerase III beta sliding clamp subunit</fullName>
    </alternativeName>
    <alternativeName>
        <fullName>DNA polymerase III subunit beta</fullName>
    </alternativeName>
</protein>
<name>DPO3B_VIBHA</name>
<sequence length="145" mass="16059">MKFTIERSHLIKPLQQVSGALGGRPTLPILGNLLLKVEDNVLSMTATDLEVELVSKVTLEGDFEAGSITVPSRKFLDICRGLPDDSIITFVLEGDRVQVRSGRSRFSLATLPANDFPNIEDWQSEVEVSLTQSDLRTLIEKTQFS</sequence>
<keyword id="KW-0963">Cytoplasm</keyword>
<keyword id="KW-0235">DNA replication</keyword>
<keyword id="KW-0238">DNA-binding</keyword>
<keyword id="KW-0239">DNA-directed DNA polymerase</keyword>
<keyword id="KW-0548">Nucleotidyltransferase</keyword>
<keyword id="KW-0808">Transferase</keyword>
<gene>
    <name type="primary">dnaN</name>
</gene>